<dbReference type="EC" id="2.1.1.177" evidence="1"/>
<dbReference type="EMBL" id="AE008691">
    <property type="protein sequence ID" value="AAM25800.1"/>
    <property type="molecule type" value="Genomic_DNA"/>
</dbReference>
<dbReference type="RefSeq" id="WP_011026673.1">
    <property type="nucleotide sequence ID" value="NC_003869.1"/>
</dbReference>
<dbReference type="SMR" id="Q8R6V3"/>
<dbReference type="STRING" id="273068.TTE2681"/>
<dbReference type="KEGG" id="tte:TTE2681"/>
<dbReference type="eggNOG" id="COG1576">
    <property type="taxonomic scope" value="Bacteria"/>
</dbReference>
<dbReference type="HOGENOM" id="CLU_100552_0_0_9"/>
<dbReference type="OrthoDB" id="9806643at2"/>
<dbReference type="Proteomes" id="UP000000555">
    <property type="component" value="Chromosome"/>
</dbReference>
<dbReference type="GO" id="GO:0005737">
    <property type="term" value="C:cytoplasm"/>
    <property type="evidence" value="ECO:0007669"/>
    <property type="project" value="UniProtKB-SubCell"/>
</dbReference>
<dbReference type="GO" id="GO:0070038">
    <property type="term" value="F:rRNA (pseudouridine-N3-)-methyltransferase activity"/>
    <property type="evidence" value="ECO:0007669"/>
    <property type="project" value="UniProtKB-UniRule"/>
</dbReference>
<dbReference type="CDD" id="cd18081">
    <property type="entry name" value="RlmH-like"/>
    <property type="match status" value="1"/>
</dbReference>
<dbReference type="Gene3D" id="3.40.1280.10">
    <property type="match status" value="1"/>
</dbReference>
<dbReference type="HAMAP" id="MF_00658">
    <property type="entry name" value="23SrRNA_methyltr_H"/>
    <property type="match status" value="1"/>
</dbReference>
<dbReference type="InterPro" id="IPR029028">
    <property type="entry name" value="Alpha/beta_knot_MTases"/>
</dbReference>
<dbReference type="InterPro" id="IPR003742">
    <property type="entry name" value="RlmH-like"/>
</dbReference>
<dbReference type="InterPro" id="IPR029026">
    <property type="entry name" value="tRNA_m1G_MTases_N"/>
</dbReference>
<dbReference type="NCBIfam" id="NF000985">
    <property type="entry name" value="PRK00103.1-3"/>
    <property type="match status" value="1"/>
</dbReference>
<dbReference type="PANTHER" id="PTHR33603">
    <property type="entry name" value="METHYLTRANSFERASE"/>
    <property type="match status" value="1"/>
</dbReference>
<dbReference type="PANTHER" id="PTHR33603:SF1">
    <property type="entry name" value="RIBOSOMAL RNA LARGE SUBUNIT METHYLTRANSFERASE H"/>
    <property type="match status" value="1"/>
</dbReference>
<dbReference type="Pfam" id="PF02590">
    <property type="entry name" value="SPOUT_MTase"/>
    <property type="match status" value="1"/>
</dbReference>
<dbReference type="PIRSF" id="PIRSF004505">
    <property type="entry name" value="MT_bac"/>
    <property type="match status" value="1"/>
</dbReference>
<dbReference type="SUPFAM" id="SSF75217">
    <property type="entry name" value="alpha/beta knot"/>
    <property type="match status" value="1"/>
</dbReference>
<gene>
    <name evidence="1" type="primary">rlmH2</name>
    <name type="ordered locus">TTE2681</name>
</gene>
<name>RLMH2_CALS4</name>
<organism>
    <name type="scientific">Caldanaerobacter subterraneus subsp. tengcongensis (strain DSM 15242 / JCM 11007 / NBRC 100824 / MB4)</name>
    <name type="common">Thermoanaerobacter tengcongensis</name>
    <dbReference type="NCBI Taxonomy" id="273068"/>
    <lineage>
        <taxon>Bacteria</taxon>
        <taxon>Bacillati</taxon>
        <taxon>Bacillota</taxon>
        <taxon>Clostridia</taxon>
        <taxon>Thermoanaerobacterales</taxon>
        <taxon>Thermoanaerobacteraceae</taxon>
        <taxon>Caldanaerobacter</taxon>
    </lineage>
</organism>
<feature type="chain" id="PRO_0000198204" description="Ribosomal RNA large subunit methyltransferase H 2">
    <location>
        <begin position="1"/>
        <end position="148"/>
    </location>
</feature>
<feature type="binding site" evidence="1">
    <location>
        <position position="74"/>
    </location>
    <ligand>
        <name>S-adenosyl-L-methionine</name>
        <dbReference type="ChEBI" id="CHEBI:59789"/>
    </ligand>
</feature>
<feature type="binding site" evidence="1">
    <location>
        <position position="106"/>
    </location>
    <ligand>
        <name>S-adenosyl-L-methionine</name>
        <dbReference type="ChEBI" id="CHEBI:59789"/>
    </ligand>
</feature>
<feature type="binding site" evidence="1">
    <location>
        <begin position="125"/>
        <end position="130"/>
    </location>
    <ligand>
        <name>S-adenosyl-L-methionine</name>
        <dbReference type="ChEBI" id="CHEBI:59789"/>
    </ligand>
</feature>
<accession>Q8R6V3</accession>
<keyword id="KW-0963">Cytoplasm</keyword>
<keyword id="KW-0489">Methyltransferase</keyword>
<keyword id="KW-1185">Reference proteome</keyword>
<keyword id="KW-0698">rRNA processing</keyword>
<keyword id="KW-0949">S-adenosyl-L-methionine</keyword>
<keyword id="KW-0808">Transferase</keyword>
<protein>
    <recommendedName>
        <fullName evidence="1">Ribosomal RNA large subunit methyltransferase H 2</fullName>
        <ecNumber evidence="1">2.1.1.177</ecNumber>
    </recommendedName>
    <alternativeName>
        <fullName evidence="1">23S rRNA (pseudouridine1915-N3)-methyltransferase 2</fullName>
    </alternativeName>
    <alternativeName>
        <fullName evidence="1">23S rRNA m3Psi1915 methyltransferase 2</fullName>
    </alternativeName>
    <alternativeName>
        <fullName evidence="1">rRNA (pseudouridine-N3-)-methyltransferase RlmH 2</fullName>
    </alternativeName>
</protein>
<comment type="function">
    <text evidence="1">Specifically methylates the pseudouridine at position 1915 (m3Psi1915) in 23S rRNA.</text>
</comment>
<comment type="catalytic activity">
    <reaction evidence="1">
        <text>pseudouridine(1915) in 23S rRNA + S-adenosyl-L-methionine = N(3)-methylpseudouridine(1915) in 23S rRNA + S-adenosyl-L-homocysteine + H(+)</text>
        <dbReference type="Rhea" id="RHEA:42752"/>
        <dbReference type="Rhea" id="RHEA-COMP:10221"/>
        <dbReference type="Rhea" id="RHEA-COMP:10222"/>
        <dbReference type="ChEBI" id="CHEBI:15378"/>
        <dbReference type="ChEBI" id="CHEBI:57856"/>
        <dbReference type="ChEBI" id="CHEBI:59789"/>
        <dbReference type="ChEBI" id="CHEBI:65314"/>
        <dbReference type="ChEBI" id="CHEBI:74486"/>
        <dbReference type="EC" id="2.1.1.177"/>
    </reaction>
</comment>
<comment type="subunit">
    <text evidence="1">Homodimer.</text>
</comment>
<comment type="subcellular location">
    <subcellularLocation>
        <location evidence="1">Cytoplasm</location>
    </subcellularLocation>
</comment>
<comment type="similarity">
    <text evidence="1">Belongs to the RNA methyltransferase RlmH family.</text>
</comment>
<evidence type="ECO:0000255" key="1">
    <source>
        <dbReference type="HAMAP-Rule" id="MF_00658"/>
    </source>
</evidence>
<reference key="1">
    <citation type="journal article" date="2002" name="Genome Res.">
        <title>A complete sequence of the T. tengcongensis genome.</title>
        <authorList>
            <person name="Bao Q."/>
            <person name="Tian Y."/>
            <person name="Li W."/>
            <person name="Xu Z."/>
            <person name="Xuan Z."/>
            <person name="Hu S."/>
            <person name="Dong W."/>
            <person name="Yang J."/>
            <person name="Chen Y."/>
            <person name="Xue Y."/>
            <person name="Xu Y."/>
            <person name="Lai X."/>
            <person name="Huang L."/>
            <person name="Dong X."/>
            <person name="Ma Y."/>
            <person name="Ling L."/>
            <person name="Tan H."/>
            <person name="Chen R."/>
            <person name="Wang J."/>
            <person name="Yu J."/>
            <person name="Yang H."/>
        </authorList>
    </citation>
    <scope>NUCLEOTIDE SEQUENCE [LARGE SCALE GENOMIC DNA]</scope>
    <source>
        <strain>DSM 15242 / JCM 11007 / NBRC 100824 / MB4</strain>
    </source>
</reference>
<proteinExistence type="inferred from homology"/>
<sequence length="148" mass="16909">MKIQIIAVGTIKENYIKDGIKFYLDKLKKIYDIEIVEIKEEEDPGTPASREKVLETEGERILYKIDRESFVIALAIEGKEVSTEEFASLVKKAFGMGYKKVVFVIGGSLGIWGKVKERADVNISFSKMTFPHQLTRLLLLEQIYYALL</sequence>